<feature type="chain" id="PRO_0000314753" description="Copper-transporting ATPase ccc2">
    <location>
        <begin position="1"/>
        <end position="904"/>
    </location>
</feature>
<feature type="topological domain" description="Cytoplasmic" evidence="1">
    <location>
        <begin position="1"/>
        <end position="172"/>
    </location>
</feature>
<feature type="transmembrane region" description="Helical" evidence="2">
    <location>
        <begin position="173"/>
        <end position="193"/>
    </location>
</feature>
<feature type="topological domain" description="Lumenal, vesicle" evidence="1">
    <location>
        <begin position="194"/>
        <end position="197"/>
    </location>
</feature>
<feature type="transmembrane region" description="Helical" evidence="2">
    <location>
        <begin position="198"/>
        <end position="218"/>
    </location>
</feature>
<feature type="topological domain" description="Cytoplasmic" evidence="1">
    <location>
        <begin position="219"/>
        <end position="246"/>
    </location>
</feature>
<feature type="transmembrane region" description="Helical" evidence="2">
    <location>
        <begin position="247"/>
        <end position="267"/>
    </location>
</feature>
<feature type="topological domain" description="Lumenal, vesicle" evidence="1">
    <location>
        <begin position="268"/>
        <end position="278"/>
    </location>
</feature>
<feature type="transmembrane region" description="Helical" evidence="2">
    <location>
        <begin position="279"/>
        <end position="296"/>
    </location>
</feature>
<feature type="topological domain" description="Cytoplasmic" evidence="1">
    <location>
        <begin position="297"/>
        <end position="431"/>
    </location>
</feature>
<feature type="transmembrane region" description="Helical" evidence="2">
    <location>
        <begin position="432"/>
        <end position="452"/>
    </location>
</feature>
<feature type="topological domain" description="Lumenal, vesicle" evidence="1">
    <location>
        <begin position="453"/>
        <end position="469"/>
    </location>
</feature>
<feature type="transmembrane region" description="Helical" evidence="2">
    <location>
        <begin position="470"/>
        <end position="490"/>
    </location>
</feature>
<feature type="topological domain" description="Cytoplasmic" evidence="1">
    <location>
        <begin position="491"/>
        <end position="805"/>
    </location>
</feature>
<feature type="transmembrane region" description="Helical" evidence="2">
    <location>
        <begin position="806"/>
        <end position="826"/>
    </location>
</feature>
<feature type="topological domain" description="Lumenal, vesicle" evidence="1">
    <location>
        <begin position="827"/>
        <end position="828"/>
    </location>
</feature>
<feature type="transmembrane region" description="Helical" evidence="2">
    <location>
        <begin position="829"/>
        <end position="849"/>
    </location>
</feature>
<feature type="topological domain" description="Cytoplasmic" evidence="1">
    <location>
        <begin position="850"/>
        <end position="904"/>
    </location>
</feature>
<feature type="domain" description="HMA" evidence="3">
    <location>
        <begin position="2"/>
        <end position="68"/>
    </location>
</feature>
<feature type="active site" description="4-aspartylphosphate intermediate" evidence="1">
    <location>
        <position position="529"/>
    </location>
</feature>
<feature type="binding site" evidence="3">
    <location>
        <position position="13"/>
    </location>
    <ligand>
        <name>Cu(+)</name>
        <dbReference type="ChEBI" id="CHEBI:49552"/>
    </ligand>
</feature>
<feature type="binding site" evidence="3">
    <location>
        <position position="16"/>
    </location>
    <ligand>
        <name>Cu(+)</name>
        <dbReference type="ChEBI" id="CHEBI:49552"/>
    </ligand>
</feature>
<feature type="binding site">
    <location>
        <position position="742"/>
    </location>
    <ligand>
        <name>Mg(2+)</name>
        <dbReference type="ChEBI" id="CHEBI:18420"/>
    </ligand>
</feature>
<feature type="binding site">
    <location>
        <position position="746"/>
    </location>
    <ligand>
        <name>Mg(2+)</name>
        <dbReference type="ChEBI" id="CHEBI:18420"/>
    </ligand>
</feature>
<dbReference type="EC" id="7.2.2.8"/>
<dbReference type="EMBL" id="CU329671">
    <property type="protein sequence ID" value="CAA18378.1"/>
    <property type="molecule type" value="Genomic_DNA"/>
</dbReference>
<dbReference type="PIR" id="T40072">
    <property type="entry name" value="T40072"/>
</dbReference>
<dbReference type="RefSeq" id="NP_595829.1">
    <property type="nucleotide sequence ID" value="NM_001021733.2"/>
</dbReference>
<dbReference type="SMR" id="O59666"/>
<dbReference type="BioGRID" id="277053">
    <property type="interactions" value="3"/>
</dbReference>
<dbReference type="FunCoup" id="O59666">
    <property type="interactions" value="400"/>
</dbReference>
<dbReference type="STRING" id="284812.O59666"/>
<dbReference type="TCDB" id="3.A.3.5.29">
    <property type="family name" value="the p-type atpase (p-atpase) superfamily"/>
</dbReference>
<dbReference type="iPTMnet" id="O59666"/>
<dbReference type="PaxDb" id="4896-SPBC29A3.01.1"/>
<dbReference type="EnsemblFungi" id="SPBC29A3.01.1">
    <property type="protein sequence ID" value="SPBC29A3.01.1:pep"/>
    <property type="gene ID" value="SPBC29A3.01"/>
</dbReference>
<dbReference type="GeneID" id="2540525"/>
<dbReference type="KEGG" id="spo:2540525"/>
<dbReference type="PomBase" id="SPBC29A3.01">
    <property type="gene designation" value="ccc2"/>
</dbReference>
<dbReference type="VEuPathDB" id="FungiDB:SPBC29A3.01"/>
<dbReference type="eggNOG" id="KOG0207">
    <property type="taxonomic scope" value="Eukaryota"/>
</dbReference>
<dbReference type="HOGENOM" id="CLU_001771_0_2_1"/>
<dbReference type="InParanoid" id="O59666"/>
<dbReference type="OMA" id="HWMLPAW"/>
<dbReference type="PhylomeDB" id="O59666"/>
<dbReference type="Reactome" id="R-SPO-936837">
    <property type="pathway name" value="Ion transport by P-type ATPases"/>
</dbReference>
<dbReference type="PRO" id="PR:O59666"/>
<dbReference type="Proteomes" id="UP000002485">
    <property type="component" value="Chromosome II"/>
</dbReference>
<dbReference type="GO" id="GO:0005794">
    <property type="term" value="C:Golgi apparatus"/>
    <property type="evidence" value="ECO:0007005"/>
    <property type="project" value="PomBase"/>
</dbReference>
<dbReference type="GO" id="GO:0000139">
    <property type="term" value="C:Golgi membrane"/>
    <property type="evidence" value="ECO:0000250"/>
    <property type="project" value="PomBase"/>
</dbReference>
<dbReference type="GO" id="GO:0016020">
    <property type="term" value="C:membrane"/>
    <property type="evidence" value="ECO:0000318"/>
    <property type="project" value="GO_Central"/>
</dbReference>
<dbReference type="GO" id="GO:0005524">
    <property type="term" value="F:ATP binding"/>
    <property type="evidence" value="ECO:0007669"/>
    <property type="project" value="UniProtKB-KW"/>
</dbReference>
<dbReference type="GO" id="GO:0016887">
    <property type="term" value="F:ATP hydrolysis activity"/>
    <property type="evidence" value="ECO:0007669"/>
    <property type="project" value="InterPro"/>
</dbReference>
<dbReference type="GO" id="GO:0005507">
    <property type="term" value="F:copper ion binding"/>
    <property type="evidence" value="ECO:0000318"/>
    <property type="project" value="GO_Central"/>
</dbReference>
<dbReference type="GO" id="GO:0043682">
    <property type="term" value="F:P-type divalent copper transporter activity"/>
    <property type="evidence" value="ECO:0000318"/>
    <property type="project" value="GO_Central"/>
</dbReference>
<dbReference type="GO" id="GO:0140581">
    <property type="term" value="F:P-type monovalent copper transporter activity"/>
    <property type="evidence" value="ECO:0007669"/>
    <property type="project" value="UniProtKB-EC"/>
</dbReference>
<dbReference type="GO" id="GO:0060003">
    <property type="term" value="P:copper ion export"/>
    <property type="evidence" value="ECO:0000266"/>
    <property type="project" value="PomBase"/>
</dbReference>
<dbReference type="GO" id="GO:0055070">
    <property type="term" value="P:copper ion homeostasis"/>
    <property type="evidence" value="ECO:0000318"/>
    <property type="project" value="GO_Central"/>
</dbReference>
<dbReference type="GO" id="GO:0006878">
    <property type="term" value="P:intracellular copper ion homeostasis"/>
    <property type="evidence" value="ECO:0000304"/>
    <property type="project" value="PomBase"/>
</dbReference>
<dbReference type="CDD" id="cd00371">
    <property type="entry name" value="HMA"/>
    <property type="match status" value="1"/>
</dbReference>
<dbReference type="CDD" id="cd02094">
    <property type="entry name" value="P-type_ATPase_Cu-like"/>
    <property type="match status" value="1"/>
</dbReference>
<dbReference type="FunFam" id="3.30.70.100:FF:000001">
    <property type="entry name" value="ATPase copper transporting beta"/>
    <property type="match status" value="1"/>
</dbReference>
<dbReference type="FunFam" id="2.70.150.10:FF:000002">
    <property type="entry name" value="Copper-transporting ATPase 1, putative"/>
    <property type="match status" value="1"/>
</dbReference>
<dbReference type="Gene3D" id="3.30.70.100">
    <property type="match status" value="1"/>
</dbReference>
<dbReference type="Gene3D" id="3.40.1110.10">
    <property type="entry name" value="Calcium-transporting ATPase, cytoplasmic domain N"/>
    <property type="match status" value="2"/>
</dbReference>
<dbReference type="Gene3D" id="2.70.150.10">
    <property type="entry name" value="Calcium-transporting ATPase, cytoplasmic transduction domain A"/>
    <property type="match status" value="1"/>
</dbReference>
<dbReference type="Gene3D" id="3.40.50.1000">
    <property type="entry name" value="HAD superfamily/HAD-like"/>
    <property type="match status" value="1"/>
</dbReference>
<dbReference type="InterPro" id="IPR023299">
    <property type="entry name" value="ATPase_P-typ_cyto_dom_N"/>
</dbReference>
<dbReference type="InterPro" id="IPR018303">
    <property type="entry name" value="ATPase_P-typ_P_site"/>
</dbReference>
<dbReference type="InterPro" id="IPR023298">
    <property type="entry name" value="ATPase_P-typ_TM_dom_sf"/>
</dbReference>
<dbReference type="InterPro" id="IPR008250">
    <property type="entry name" value="ATPase_P-typ_transduc_dom_A_sf"/>
</dbReference>
<dbReference type="InterPro" id="IPR036412">
    <property type="entry name" value="HAD-like_sf"/>
</dbReference>
<dbReference type="InterPro" id="IPR023214">
    <property type="entry name" value="HAD_sf"/>
</dbReference>
<dbReference type="InterPro" id="IPR017969">
    <property type="entry name" value="Heavy-metal-associated_CS"/>
</dbReference>
<dbReference type="InterPro" id="IPR006121">
    <property type="entry name" value="HMA_dom"/>
</dbReference>
<dbReference type="InterPro" id="IPR036163">
    <property type="entry name" value="HMA_dom_sf"/>
</dbReference>
<dbReference type="InterPro" id="IPR027256">
    <property type="entry name" value="P-typ_ATPase_IB"/>
</dbReference>
<dbReference type="InterPro" id="IPR001757">
    <property type="entry name" value="P_typ_ATPase"/>
</dbReference>
<dbReference type="InterPro" id="IPR044492">
    <property type="entry name" value="P_typ_ATPase_HD_dom"/>
</dbReference>
<dbReference type="NCBIfam" id="TIGR01525">
    <property type="entry name" value="ATPase-IB_hvy"/>
    <property type="match status" value="1"/>
</dbReference>
<dbReference type="NCBIfam" id="TIGR01494">
    <property type="entry name" value="ATPase_P-type"/>
    <property type="match status" value="2"/>
</dbReference>
<dbReference type="PANTHER" id="PTHR46594">
    <property type="entry name" value="P-TYPE CATION-TRANSPORTING ATPASE"/>
    <property type="match status" value="1"/>
</dbReference>
<dbReference type="PANTHER" id="PTHR46594:SF4">
    <property type="entry name" value="P-TYPE CATION-TRANSPORTING ATPASE"/>
    <property type="match status" value="1"/>
</dbReference>
<dbReference type="Pfam" id="PF00122">
    <property type="entry name" value="E1-E2_ATPase"/>
    <property type="match status" value="1"/>
</dbReference>
<dbReference type="Pfam" id="PF00403">
    <property type="entry name" value="HMA"/>
    <property type="match status" value="1"/>
</dbReference>
<dbReference type="Pfam" id="PF00702">
    <property type="entry name" value="Hydrolase"/>
    <property type="match status" value="1"/>
</dbReference>
<dbReference type="PRINTS" id="PR00119">
    <property type="entry name" value="CATATPASE"/>
</dbReference>
<dbReference type="PRINTS" id="PR00942">
    <property type="entry name" value="CUATPASEI"/>
</dbReference>
<dbReference type="SFLD" id="SFLDG00002">
    <property type="entry name" value="C1.7:_P-type_atpase_like"/>
    <property type="match status" value="1"/>
</dbReference>
<dbReference type="SFLD" id="SFLDF00027">
    <property type="entry name" value="p-type_atpase"/>
    <property type="match status" value="1"/>
</dbReference>
<dbReference type="SUPFAM" id="SSF81653">
    <property type="entry name" value="Calcium ATPase, transduction domain A"/>
    <property type="match status" value="1"/>
</dbReference>
<dbReference type="SUPFAM" id="SSF81665">
    <property type="entry name" value="Calcium ATPase, transmembrane domain M"/>
    <property type="match status" value="1"/>
</dbReference>
<dbReference type="SUPFAM" id="SSF56784">
    <property type="entry name" value="HAD-like"/>
    <property type="match status" value="1"/>
</dbReference>
<dbReference type="SUPFAM" id="SSF55008">
    <property type="entry name" value="HMA, heavy metal-associated domain"/>
    <property type="match status" value="1"/>
</dbReference>
<dbReference type="PROSITE" id="PS00154">
    <property type="entry name" value="ATPASE_E1_E2"/>
    <property type="match status" value="1"/>
</dbReference>
<dbReference type="PROSITE" id="PS01047">
    <property type="entry name" value="HMA_1"/>
    <property type="match status" value="1"/>
</dbReference>
<dbReference type="PROSITE" id="PS50846">
    <property type="entry name" value="HMA_2"/>
    <property type="match status" value="1"/>
</dbReference>
<accession>O59666</accession>
<keyword id="KW-0067">ATP-binding</keyword>
<keyword id="KW-0186">Copper</keyword>
<keyword id="KW-0187">Copper transport</keyword>
<keyword id="KW-0333">Golgi apparatus</keyword>
<keyword id="KW-0406">Ion transport</keyword>
<keyword id="KW-0460">Magnesium</keyword>
<keyword id="KW-0472">Membrane</keyword>
<keyword id="KW-0479">Metal-binding</keyword>
<keyword id="KW-0547">Nucleotide-binding</keyword>
<keyword id="KW-1185">Reference proteome</keyword>
<keyword id="KW-1278">Translocase</keyword>
<keyword id="KW-0812">Transmembrane</keyword>
<keyword id="KW-1133">Transmembrane helix</keyword>
<keyword id="KW-0813">Transport</keyword>
<organism>
    <name type="scientific">Schizosaccharomyces pombe (strain 972 / ATCC 24843)</name>
    <name type="common">Fission yeast</name>
    <dbReference type="NCBI Taxonomy" id="284812"/>
    <lineage>
        <taxon>Eukaryota</taxon>
        <taxon>Fungi</taxon>
        <taxon>Dikarya</taxon>
        <taxon>Ascomycota</taxon>
        <taxon>Taphrinomycotina</taxon>
        <taxon>Schizosaccharomycetes</taxon>
        <taxon>Schizosaccharomycetales</taxon>
        <taxon>Schizosaccharomycetaceae</taxon>
        <taxon>Schizosaccharomyces</taxon>
    </lineage>
</organism>
<sequence length="904" mass="97895">MYTTTLSVQGMTCTSCVASIQSMLEGVEGIEQFTISLLLERAIAVHDPSIISPDQIAEKIEDCGFDASVISSTEGEHGVMANYLLLSPMQAEQWTKVHNHINELQGVLSVNCSSSPDAAIRVIYDSEITGPRSIMKEILSMGVKCTFQPVDSSTSRILSLQRGSQIRVWKIRFIISISFSLAVMFLPQIFDSCDSMRAAFLVPHYFGICAGHIISLVLSLPVQFGVGRVYYSAAYHALKRGTANMDVLVSLGSTVAFAASIFFMILYSARHADNPAPIFFDTADMLLTFVTLGRYLESKAKGSTSAALSQLLSLAPSSATIIEDNEQIEILADLIERGDLILVKPGEIIPVDGTVVEGSSYVDESSVSGEPVPVHKTIDDELLSGTANGNGRLLVKATKSPRESQLAVIVDLVQRAQISHAPIQQFADRVAGIFVPVIVALSISTFTFWFLFTKYSSKYPSVFDDPMGKFAVCLKLTISVVVVACPCALGLSTPTAVMVGTGVGALNGIIIKGGEILERLNQVDTVVFDKTGTLTVGKLSVTDISIVDNLEELLDIPKNIFWAFVKASESSSEHPIGKAITEKASEFTDVSEIGIESFNAVPGEGVDVVLRWKERTFHALLGNSLLLEHNNVSIPDDFDSKLKLSSSSGLTCVRIAIDGQFVGFLGCMDQVRPDSYQTVSALKQLGKKVCLLTGDQKATARRVAQGLEIDFSDVYAEAVPSQKAEIIQKLKDQKHCVAMVGDGINDSPSLVLADVGIAPINGSGIALESADVILVRKGVLLDTAVSFDLSRVIVKRIKMNLVWACIYNFVMIPIAMGFFLPWGIYLNPMWASAAMMFSSLSVLASSLLLRRWKKPKSLIFSEADDVETESSTNSSVLQKVYTATRSIFGRNKSSNKYQPVANEV</sequence>
<reference key="1">
    <citation type="journal article" date="2002" name="Nature">
        <title>The genome sequence of Schizosaccharomyces pombe.</title>
        <authorList>
            <person name="Wood V."/>
            <person name="Gwilliam R."/>
            <person name="Rajandream M.A."/>
            <person name="Lyne M.H."/>
            <person name="Lyne R."/>
            <person name="Stewart A."/>
            <person name="Sgouros J.G."/>
            <person name="Peat N."/>
            <person name="Hayles J."/>
            <person name="Baker S.G."/>
            <person name="Basham D."/>
            <person name="Bowman S."/>
            <person name="Brooks K."/>
            <person name="Brown D."/>
            <person name="Brown S."/>
            <person name="Chillingworth T."/>
            <person name="Churcher C.M."/>
            <person name="Collins M."/>
            <person name="Connor R."/>
            <person name="Cronin A."/>
            <person name="Davis P."/>
            <person name="Feltwell T."/>
            <person name="Fraser A."/>
            <person name="Gentles S."/>
            <person name="Goble A."/>
            <person name="Hamlin N."/>
            <person name="Harris D.E."/>
            <person name="Hidalgo J."/>
            <person name="Hodgson G."/>
            <person name="Holroyd S."/>
            <person name="Hornsby T."/>
            <person name="Howarth S."/>
            <person name="Huckle E.J."/>
            <person name="Hunt S."/>
            <person name="Jagels K."/>
            <person name="James K.D."/>
            <person name="Jones L."/>
            <person name="Jones M."/>
            <person name="Leather S."/>
            <person name="McDonald S."/>
            <person name="McLean J."/>
            <person name="Mooney P."/>
            <person name="Moule S."/>
            <person name="Mungall K.L."/>
            <person name="Murphy L.D."/>
            <person name="Niblett D."/>
            <person name="Odell C."/>
            <person name="Oliver K."/>
            <person name="O'Neil S."/>
            <person name="Pearson D."/>
            <person name="Quail M.A."/>
            <person name="Rabbinowitsch E."/>
            <person name="Rutherford K.M."/>
            <person name="Rutter S."/>
            <person name="Saunders D."/>
            <person name="Seeger K."/>
            <person name="Sharp S."/>
            <person name="Skelton J."/>
            <person name="Simmonds M.N."/>
            <person name="Squares R."/>
            <person name="Squares S."/>
            <person name="Stevens K."/>
            <person name="Taylor K."/>
            <person name="Taylor R.G."/>
            <person name="Tivey A."/>
            <person name="Walsh S.V."/>
            <person name="Warren T."/>
            <person name="Whitehead S."/>
            <person name="Woodward J.R."/>
            <person name="Volckaert G."/>
            <person name="Aert R."/>
            <person name="Robben J."/>
            <person name="Grymonprez B."/>
            <person name="Weltjens I."/>
            <person name="Vanstreels E."/>
            <person name="Rieger M."/>
            <person name="Schaefer M."/>
            <person name="Mueller-Auer S."/>
            <person name="Gabel C."/>
            <person name="Fuchs M."/>
            <person name="Duesterhoeft A."/>
            <person name="Fritzc C."/>
            <person name="Holzer E."/>
            <person name="Moestl D."/>
            <person name="Hilbert H."/>
            <person name="Borzym K."/>
            <person name="Langer I."/>
            <person name="Beck A."/>
            <person name="Lehrach H."/>
            <person name="Reinhardt R."/>
            <person name="Pohl T.M."/>
            <person name="Eger P."/>
            <person name="Zimmermann W."/>
            <person name="Wedler H."/>
            <person name="Wambutt R."/>
            <person name="Purnelle B."/>
            <person name="Goffeau A."/>
            <person name="Cadieu E."/>
            <person name="Dreano S."/>
            <person name="Gloux S."/>
            <person name="Lelaure V."/>
            <person name="Mottier S."/>
            <person name="Galibert F."/>
            <person name="Aves S.J."/>
            <person name="Xiang Z."/>
            <person name="Hunt C."/>
            <person name="Moore K."/>
            <person name="Hurst S.M."/>
            <person name="Lucas M."/>
            <person name="Rochet M."/>
            <person name="Gaillardin C."/>
            <person name="Tallada V.A."/>
            <person name="Garzon A."/>
            <person name="Thode G."/>
            <person name="Daga R.R."/>
            <person name="Cruzado L."/>
            <person name="Jimenez J."/>
            <person name="Sanchez M."/>
            <person name="del Rey F."/>
            <person name="Benito J."/>
            <person name="Dominguez A."/>
            <person name="Revuelta J.L."/>
            <person name="Moreno S."/>
            <person name="Armstrong J."/>
            <person name="Forsburg S.L."/>
            <person name="Cerutti L."/>
            <person name="Lowe T."/>
            <person name="McCombie W.R."/>
            <person name="Paulsen I."/>
            <person name="Potashkin J."/>
            <person name="Shpakovski G.V."/>
            <person name="Ussery D."/>
            <person name="Barrell B.G."/>
            <person name="Nurse P."/>
        </authorList>
    </citation>
    <scope>NUCLEOTIDE SEQUENCE [LARGE SCALE GENOMIC DNA]</scope>
    <source>
        <strain>972 / ATCC 24843</strain>
    </source>
</reference>
<reference key="2">
    <citation type="journal article" date="2006" name="Nat. Biotechnol.">
        <title>ORFeome cloning and global analysis of protein localization in the fission yeast Schizosaccharomyces pombe.</title>
        <authorList>
            <person name="Matsuyama A."/>
            <person name="Arai R."/>
            <person name="Yashiroda Y."/>
            <person name="Shirai A."/>
            <person name="Kamata A."/>
            <person name="Sekido S."/>
            <person name="Kobayashi Y."/>
            <person name="Hashimoto A."/>
            <person name="Hamamoto M."/>
            <person name="Hiraoka Y."/>
            <person name="Horinouchi S."/>
            <person name="Yoshida M."/>
        </authorList>
    </citation>
    <scope>SUBCELLULAR LOCATION [LARGE SCALE ANALYSIS]</scope>
</reference>
<proteinExistence type="inferred from homology"/>
<evidence type="ECO:0000250" key="1"/>
<evidence type="ECO:0000255" key="2"/>
<evidence type="ECO:0000255" key="3">
    <source>
        <dbReference type="PROSITE-ProRule" id="PRU00280"/>
    </source>
</evidence>
<evidence type="ECO:0000269" key="4">
    <source>
    </source>
</evidence>
<evidence type="ECO:0000305" key="5"/>
<name>ATU2_SCHPO</name>
<gene>
    <name type="primary">ccc2</name>
    <name type="ORF">SPBC29A3.01</name>
</gene>
<comment type="function">
    <text evidence="1">Probably involved in copper transport and in the regulation of cellular copper level. Retrieves copper from the metallochaperone atx1 and incorporates it into trans-Golgi vesicles (By similarity).</text>
</comment>
<comment type="catalytic activity">
    <reaction>
        <text>Cu(+)(in) + ATP + H2O = Cu(+)(out) + ADP + phosphate + H(+)</text>
        <dbReference type="Rhea" id="RHEA:25792"/>
        <dbReference type="ChEBI" id="CHEBI:15377"/>
        <dbReference type="ChEBI" id="CHEBI:15378"/>
        <dbReference type="ChEBI" id="CHEBI:30616"/>
        <dbReference type="ChEBI" id="CHEBI:43474"/>
        <dbReference type="ChEBI" id="CHEBI:49552"/>
        <dbReference type="ChEBI" id="CHEBI:456216"/>
        <dbReference type="EC" id="7.2.2.8"/>
    </reaction>
</comment>
<comment type="subcellular location">
    <subcellularLocation>
        <location evidence="4">Golgi apparatus</location>
        <location evidence="4">trans-Golgi network membrane</location>
        <topology evidence="4">Multi-pass membrane protein</topology>
    </subcellularLocation>
</comment>
<comment type="similarity">
    <text evidence="5">Belongs to the cation transport ATPase (P-type) (TC 3.A.3) family. Type IB subfamily.</text>
</comment>
<protein>
    <recommendedName>
        <fullName>Copper-transporting ATPase ccc2</fullName>
        <ecNumber>7.2.2.8</ecNumber>
    </recommendedName>
    <alternativeName>
        <fullName>Cu(2+)-ATPase</fullName>
    </alternativeName>
</protein>